<organism>
    <name type="scientific">Bacillus subtilis (strain 168)</name>
    <dbReference type="NCBI Taxonomy" id="224308"/>
    <lineage>
        <taxon>Bacteria</taxon>
        <taxon>Bacillati</taxon>
        <taxon>Bacillota</taxon>
        <taxon>Bacilli</taxon>
        <taxon>Bacillales</taxon>
        <taxon>Bacillaceae</taxon>
        <taxon>Bacillus</taxon>
    </lineage>
</organism>
<dbReference type="EC" id="7.2.2.12" evidence="4 5"/>
<dbReference type="EC" id="7.2.2.21" evidence="4 5"/>
<dbReference type="EMBL" id="AL009126">
    <property type="protein sequence ID" value="CAB15354.3"/>
    <property type="molecule type" value="Genomic_DNA"/>
</dbReference>
<dbReference type="PIR" id="D70041">
    <property type="entry name" value="D70041"/>
</dbReference>
<dbReference type="RefSeq" id="NP_391229.3">
    <property type="nucleotide sequence ID" value="NC_000964.3"/>
</dbReference>
<dbReference type="SMR" id="O32219"/>
<dbReference type="FunCoup" id="O32219">
    <property type="interactions" value="32"/>
</dbReference>
<dbReference type="STRING" id="224308.BSU33490"/>
<dbReference type="TCDB" id="3.A.3.6.10">
    <property type="family name" value="the p-type atpase (p-atpase) superfamily"/>
</dbReference>
<dbReference type="jPOST" id="O32219"/>
<dbReference type="PaxDb" id="224308-BSU33490"/>
<dbReference type="EnsemblBacteria" id="CAB15354">
    <property type="protein sequence ID" value="CAB15354"/>
    <property type="gene ID" value="BSU_33490"/>
</dbReference>
<dbReference type="GeneID" id="936034"/>
<dbReference type="KEGG" id="bsu:BSU33490"/>
<dbReference type="eggNOG" id="COG2217">
    <property type="taxonomic scope" value="Bacteria"/>
</dbReference>
<dbReference type="InParanoid" id="O32219"/>
<dbReference type="OrthoDB" id="9813266at2"/>
<dbReference type="BioCyc" id="BSUB:BSU33490-MONOMER"/>
<dbReference type="Proteomes" id="UP000001570">
    <property type="component" value="Chromosome"/>
</dbReference>
<dbReference type="GO" id="GO:0016020">
    <property type="term" value="C:membrane"/>
    <property type="evidence" value="ECO:0000318"/>
    <property type="project" value="GO_Central"/>
</dbReference>
<dbReference type="GO" id="GO:0005886">
    <property type="term" value="C:plasma membrane"/>
    <property type="evidence" value="ECO:0007669"/>
    <property type="project" value="UniProtKB-SubCell"/>
</dbReference>
<dbReference type="GO" id="GO:0005524">
    <property type="term" value="F:ATP binding"/>
    <property type="evidence" value="ECO:0007669"/>
    <property type="project" value="UniProtKB-KW"/>
</dbReference>
<dbReference type="GO" id="GO:0016887">
    <property type="term" value="F:ATP hydrolysis activity"/>
    <property type="evidence" value="ECO:0007669"/>
    <property type="project" value="InterPro"/>
</dbReference>
<dbReference type="GO" id="GO:0015086">
    <property type="term" value="F:cadmium ion transmembrane transporter activity"/>
    <property type="evidence" value="ECO:0000318"/>
    <property type="project" value="GO_Central"/>
</dbReference>
<dbReference type="GO" id="GO:0046872">
    <property type="term" value="F:metal ion binding"/>
    <property type="evidence" value="ECO:0007669"/>
    <property type="project" value="UniProtKB-KW"/>
</dbReference>
<dbReference type="GO" id="GO:0008551">
    <property type="term" value="F:P-type cadmium transporter activity"/>
    <property type="evidence" value="ECO:0007669"/>
    <property type="project" value="UniProtKB-EC"/>
</dbReference>
<dbReference type="GO" id="GO:0016463">
    <property type="term" value="F:P-type zinc transporter activity"/>
    <property type="evidence" value="ECO:0007669"/>
    <property type="project" value="UniProtKB-EC"/>
</dbReference>
<dbReference type="GO" id="GO:0006824">
    <property type="term" value="P:cobalt ion transport"/>
    <property type="evidence" value="ECO:0007669"/>
    <property type="project" value="UniProtKB-KW"/>
</dbReference>
<dbReference type="GO" id="GO:0006825">
    <property type="term" value="P:copper ion transport"/>
    <property type="evidence" value="ECO:0007669"/>
    <property type="project" value="UniProtKB-KW"/>
</dbReference>
<dbReference type="GO" id="GO:0030001">
    <property type="term" value="P:metal ion transport"/>
    <property type="evidence" value="ECO:0000318"/>
    <property type="project" value="GO_Central"/>
</dbReference>
<dbReference type="GO" id="GO:0046686">
    <property type="term" value="P:response to cadmium ion"/>
    <property type="evidence" value="ECO:0007669"/>
    <property type="project" value="UniProtKB-KW"/>
</dbReference>
<dbReference type="GO" id="GO:0055085">
    <property type="term" value="P:transmembrane transport"/>
    <property type="evidence" value="ECO:0000318"/>
    <property type="project" value="GO_Central"/>
</dbReference>
<dbReference type="CDD" id="cd00371">
    <property type="entry name" value="HMA"/>
    <property type="match status" value="1"/>
</dbReference>
<dbReference type="CDD" id="cd07548">
    <property type="entry name" value="P-type_ATPase-Cd_Zn_Co_like"/>
    <property type="match status" value="1"/>
</dbReference>
<dbReference type="FunFam" id="3.40.1110.10:FF:000066">
    <property type="entry name" value="Cadmium-translocating P-type ATPase"/>
    <property type="match status" value="1"/>
</dbReference>
<dbReference type="FunFam" id="2.70.150.10:FF:000002">
    <property type="entry name" value="Copper-transporting ATPase 1, putative"/>
    <property type="match status" value="1"/>
</dbReference>
<dbReference type="Gene3D" id="3.30.70.100">
    <property type="match status" value="1"/>
</dbReference>
<dbReference type="Gene3D" id="3.40.1110.10">
    <property type="entry name" value="Calcium-transporting ATPase, cytoplasmic domain N"/>
    <property type="match status" value="1"/>
</dbReference>
<dbReference type="Gene3D" id="2.70.150.10">
    <property type="entry name" value="Calcium-transporting ATPase, cytoplasmic transduction domain A"/>
    <property type="match status" value="1"/>
</dbReference>
<dbReference type="Gene3D" id="3.40.50.1000">
    <property type="entry name" value="HAD superfamily/HAD-like"/>
    <property type="match status" value="1"/>
</dbReference>
<dbReference type="InterPro" id="IPR023299">
    <property type="entry name" value="ATPase_P-typ_cyto_dom_N"/>
</dbReference>
<dbReference type="InterPro" id="IPR018303">
    <property type="entry name" value="ATPase_P-typ_P_site"/>
</dbReference>
<dbReference type="InterPro" id="IPR023298">
    <property type="entry name" value="ATPase_P-typ_TM_dom_sf"/>
</dbReference>
<dbReference type="InterPro" id="IPR008250">
    <property type="entry name" value="ATPase_P-typ_transduc_dom_A_sf"/>
</dbReference>
<dbReference type="InterPro" id="IPR051014">
    <property type="entry name" value="Cation_Transport_ATPase_IB"/>
</dbReference>
<dbReference type="InterPro" id="IPR036412">
    <property type="entry name" value="HAD-like_sf"/>
</dbReference>
<dbReference type="InterPro" id="IPR023214">
    <property type="entry name" value="HAD_sf"/>
</dbReference>
<dbReference type="InterPro" id="IPR017969">
    <property type="entry name" value="Heavy-metal-associated_CS"/>
</dbReference>
<dbReference type="InterPro" id="IPR006121">
    <property type="entry name" value="HMA_dom"/>
</dbReference>
<dbReference type="InterPro" id="IPR036163">
    <property type="entry name" value="HMA_dom_sf"/>
</dbReference>
<dbReference type="InterPro" id="IPR027256">
    <property type="entry name" value="P-typ_ATPase_IB"/>
</dbReference>
<dbReference type="InterPro" id="IPR001757">
    <property type="entry name" value="P_typ_ATPase"/>
</dbReference>
<dbReference type="InterPro" id="IPR044492">
    <property type="entry name" value="P_typ_ATPase_HD_dom"/>
</dbReference>
<dbReference type="NCBIfam" id="TIGR01512">
    <property type="entry name" value="ATPase-IB2_Cd"/>
    <property type="match status" value="1"/>
</dbReference>
<dbReference type="NCBIfam" id="TIGR01525">
    <property type="entry name" value="ATPase-IB_hvy"/>
    <property type="match status" value="1"/>
</dbReference>
<dbReference type="NCBIfam" id="TIGR01494">
    <property type="entry name" value="ATPase_P-type"/>
    <property type="match status" value="1"/>
</dbReference>
<dbReference type="PANTHER" id="PTHR48085">
    <property type="entry name" value="CADMIUM/ZINC-TRANSPORTING ATPASE HMA2-RELATED"/>
    <property type="match status" value="1"/>
</dbReference>
<dbReference type="PANTHER" id="PTHR48085:SF5">
    <property type="entry name" value="CADMIUM_ZINC-TRANSPORTING ATPASE HMA4-RELATED"/>
    <property type="match status" value="1"/>
</dbReference>
<dbReference type="Pfam" id="PF00122">
    <property type="entry name" value="E1-E2_ATPase"/>
    <property type="match status" value="1"/>
</dbReference>
<dbReference type="Pfam" id="PF00403">
    <property type="entry name" value="HMA"/>
    <property type="match status" value="1"/>
</dbReference>
<dbReference type="Pfam" id="PF00702">
    <property type="entry name" value="Hydrolase"/>
    <property type="match status" value="1"/>
</dbReference>
<dbReference type="PRINTS" id="PR00119">
    <property type="entry name" value="CATATPASE"/>
</dbReference>
<dbReference type="PRINTS" id="PR00941">
    <property type="entry name" value="CDATPASE"/>
</dbReference>
<dbReference type="SFLD" id="SFLDS00003">
    <property type="entry name" value="Haloacid_Dehalogenase"/>
    <property type="match status" value="1"/>
</dbReference>
<dbReference type="SFLD" id="SFLDF00027">
    <property type="entry name" value="p-type_atpase"/>
    <property type="match status" value="1"/>
</dbReference>
<dbReference type="SUPFAM" id="SSF81653">
    <property type="entry name" value="Calcium ATPase, transduction domain A"/>
    <property type="match status" value="1"/>
</dbReference>
<dbReference type="SUPFAM" id="SSF81665">
    <property type="entry name" value="Calcium ATPase, transmembrane domain M"/>
    <property type="match status" value="1"/>
</dbReference>
<dbReference type="SUPFAM" id="SSF56784">
    <property type="entry name" value="HAD-like"/>
    <property type="match status" value="1"/>
</dbReference>
<dbReference type="SUPFAM" id="SSF55008">
    <property type="entry name" value="HMA, heavy metal-associated domain"/>
    <property type="match status" value="1"/>
</dbReference>
<dbReference type="PROSITE" id="PS00154">
    <property type="entry name" value="ATPASE_E1_E2"/>
    <property type="match status" value="1"/>
</dbReference>
<dbReference type="PROSITE" id="PS01047">
    <property type="entry name" value="HMA_1"/>
    <property type="match status" value="1"/>
</dbReference>
<dbReference type="PROSITE" id="PS50846">
    <property type="entry name" value="HMA_2"/>
    <property type="match status" value="1"/>
</dbReference>
<comment type="function">
    <text evidence="5">Couples the hydrolysis of ATP with the transport of cadmium, zinc and cobalt out of the cell. Does not seem to transport copper.</text>
</comment>
<comment type="catalytic activity">
    <reaction evidence="4 5">
        <text>Zn(2+)(in) + ATP + H2O = Zn(2+)(out) + ADP + phosphate + H(+)</text>
        <dbReference type="Rhea" id="RHEA:20621"/>
        <dbReference type="ChEBI" id="CHEBI:15377"/>
        <dbReference type="ChEBI" id="CHEBI:15378"/>
        <dbReference type="ChEBI" id="CHEBI:29105"/>
        <dbReference type="ChEBI" id="CHEBI:30616"/>
        <dbReference type="ChEBI" id="CHEBI:43474"/>
        <dbReference type="ChEBI" id="CHEBI:456216"/>
        <dbReference type="EC" id="7.2.2.12"/>
    </reaction>
</comment>
<comment type="catalytic activity">
    <reaction evidence="4 5">
        <text>Cd(2+)(in) + ATP + H2O = Cd(2+)(out) + ADP + phosphate + H(+)</text>
        <dbReference type="Rhea" id="RHEA:12132"/>
        <dbReference type="ChEBI" id="CHEBI:15377"/>
        <dbReference type="ChEBI" id="CHEBI:15378"/>
        <dbReference type="ChEBI" id="CHEBI:30616"/>
        <dbReference type="ChEBI" id="CHEBI:43474"/>
        <dbReference type="ChEBI" id="CHEBI:48775"/>
        <dbReference type="ChEBI" id="CHEBI:456216"/>
        <dbReference type="EC" id="7.2.2.21"/>
    </reaction>
</comment>
<comment type="subcellular location">
    <subcellularLocation>
        <location>Cell membrane</location>
        <topology>Multi-pass membrane protein</topology>
    </subcellularLocation>
</comment>
<comment type="developmental stage">
    <text evidence="6">Expression increases rapidly at 5 hours and peaks at 7 hours after onset of sporulation.</text>
</comment>
<comment type="induction">
    <text evidence="5">By heat-shock, ethanol stress, zinc, cobalt and cadmium.</text>
</comment>
<comment type="disruption phenotype">
    <text evidence="3">Arrested in competence development and sporulation.</text>
</comment>
<comment type="similarity">
    <text evidence="7">Belongs to the cation transport ATPase (P-type) (TC 3.A.3) family. Type IB subfamily.</text>
</comment>
<feature type="chain" id="PRO_0000360852" description="Cadmium, zinc and cobalt-transporting ATPase">
    <location>
        <begin position="1"/>
        <end position="702"/>
    </location>
</feature>
<feature type="topological domain" description="Cytoplasmic" evidence="1">
    <location>
        <begin position="1"/>
        <end position="86"/>
    </location>
</feature>
<feature type="transmembrane region" description="Helical" evidence="1">
    <location>
        <begin position="87"/>
        <end position="107"/>
    </location>
</feature>
<feature type="topological domain" description="Extracellular" evidence="1">
    <location>
        <begin position="108"/>
        <end position="116"/>
    </location>
</feature>
<feature type="transmembrane region" description="Helical" evidence="1">
    <location>
        <begin position="117"/>
        <end position="136"/>
    </location>
</feature>
<feature type="topological domain" description="Cytoplasmic" evidence="1">
    <location>
        <begin position="137"/>
        <end position="143"/>
    </location>
</feature>
<feature type="transmembrane region" description="Helical" evidence="1">
    <location>
        <begin position="144"/>
        <end position="163"/>
    </location>
</feature>
<feature type="topological domain" description="Extracellular" evidence="1">
    <location>
        <begin position="164"/>
        <end position="166"/>
    </location>
</feature>
<feature type="transmembrane region" description="Helical" evidence="1">
    <location>
        <begin position="167"/>
        <end position="186"/>
    </location>
</feature>
<feature type="topological domain" description="Cytoplasmic" evidence="1">
    <location>
        <begin position="187"/>
        <end position="320"/>
    </location>
</feature>
<feature type="transmembrane region" description="Helical" evidence="1">
    <location>
        <begin position="321"/>
        <end position="339"/>
    </location>
</feature>
<feature type="topological domain" description="Extracellular" evidence="1">
    <location>
        <begin position="340"/>
        <end position="345"/>
    </location>
</feature>
<feature type="transmembrane region" description="Helical" evidence="1">
    <location>
        <begin position="346"/>
        <end position="363"/>
    </location>
</feature>
<feature type="topological domain" description="Cytoplasmic" evidence="1">
    <location>
        <begin position="364"/>
        <end position="648"/>
    </location>
</feature>
<feature type="transmembrane region" description="Helical" evidence="1">
    <location>
        <begin position="649"/>
        <end position="670"/>
    </location>
</feature>
<feature type="topological domain" description="Extracellular" evidence="1">
    <location>
        <begin position="671"/>
        <end position="678"/>
    </location>
</feature>
<feature type="transmembrane region" description="Helical" evidence="1">
    <location>
        <begin position="679"/>
        <end position="694"/>
    </location>
</feature>
<feature type="topological domain" description="Cytoplasmic" evidence="1">
    <location>
        <begin position="695"/>
        <end position="702"/>
    </location>
</feature>
<feature type="domain" description="HMA" evidence="2">
    <location>
        <begin position="4"/>
        <end position="72"/>
    </location>
</feature>
<feature type="active site" description="4-aspartylphosphate intermediate" evidence="1">
    <location>
        <position position="401"/>
    </location>
</feature>
<feature type="binding site" evidence="2">
    <location>
        <position position="15"/>
    </location>
    <ligand>
        <name>Cd(2+)</name>
        <dbReference type="ChEBI" id="CHEBI:48775"/>
    </ligand>
</feature>
<feature type="binding site" evidence="2">
    <location>
        <position position="15"/>
    </location>
    <ligand>
        <name>Co(2+)</name>
        <dbReference type="ChEBI" id="CHEBI:48828"/>
    </ligand>
</feature>
<feature type="binding site" evidence="2">
    <location>
        <position position="15"/>
    </location>
    <ligand>
        <name>Zn(2+)</name>
        <dbReference type="ChEBI" id="CHEBI:29105"/>
    </ligand>
</feature>
<feature type="binding site" evidence="2">
    <location>
        <position position="18"/>
    </location>
    <ligand>
        <name>Cd(2+)</name>
        <dbReference type="ChEBI" id="CHEBI:48775"/>
    </ligand>
</feature>
<feature type="binding site" evidence="2">
    <location>
        <position position="18"/>
    </location>
    <ligand>
        <name>Co(2+)</name>
        <dbReference type="ChEBI" id="CHEBI:48828"/>
    </ligand>
</feature>
<feature type="binding site" evidence="2">
    <location>
        <position position="18"/>
    </location>
    <ligand>
        <name>Zn(2+)</name>
        <dbReference type="ChEBI" id="CHEBI:29105"/>
    </ligand>
</feature>
<feature type="binding site">
    <location>
        <position position="595"/>
    </location>
    <ligand>
        <name>Mg(2+)</name>
        <dbReference type="ChEBI" id="CHEBI:18420"/>
    </ligand>
</feature>
<feature type="binding site">
    <location>
        <position position="599"/>
    </location>
    <ligand>
        <name>Mg(2+)</name>
        <dbReference type="ChEBI" id="CHEBI:18420"/>
    </ligand>
</feature>
<sequence length="702" mass="75405">MRLVKQEYVLDGLDCSNCARKIENGVKGIKGINGCAVNFAASTLTVSADGKEEQWVTNKVEKKVKSIDPHVTVRQKHIKKSADDGYRNRMVNMLIRMAAAVILGAAAYLVQSGTIEFFLFLGAYLIIGGDIIIRAVKNIIRGQVFDEHFLMALATIGAFLIQQYPEGVAVMLFYQIGELFQGAAVSRSRKSISALMDIRPDYANLKTKNGIEQVSSEDVQTGDIIVVNPGESIPLDGKVVQGSAMVDTSALTGESVPRKAAEGQDVMSGFINQNGVLHIEVTKGYQESAVSKILDLVQNASSRKARTENFITKFAKYYTPAVVIIAVLLAFVPPLVLSGAALSDWVYRALIFLVISCPCALVVSIPLGFFGGIGAASKAGVLVKGSNYLEALNQVKYAVFDKTGTLTKGSFEVTEIKPAEGFTKDRLLEAAAYAELHSQHPIAESVRKAYGKMLSSDEIESYEEISGHGIFAKVNGTEILAGNKKLMEREQIEDVPDENAGTIVHVAVDQRYAGAIIIADEIKEDAAQAVADLKSLGIKQTAMLTGDSKQTGEAVGKQLGIGEVYAELLPQDKVAQVEALEAKLLPSEKLIFVGDGINDTPVLARADIGVAMGGLGSDAAVEAADIVLMTDQPSKIAEAIRIAKRTRRIVWQNIGFALGVKAIFLILGAFGIATMWEAVFSDVGVTLLAVANAMRVMRLKNK</sequence>
<protein>
    <recommendedName>
        <fullName>Cadmium, zinc and cobalt-transporting ATPase</fullName>
        <ecNumber evidence="4 5">7.2.2.12</ecNumber>
        <ecNumber evidence="4 5">7.2.2.21</ecNumber>
    </recommendedName>
</protein>
<evidence type="ECO:0000250" key="1"/>
<evidence type="ECO:0000255" key="2">
    <source>
        <dbReference type="PROSITE-ProRule" id="PRU00280"/>
    </source>
</evidence>
<evidence type="ECO:0000269" key="3">
    <source>
    </source>
</evidence>
<evidence type="ECO:0000269" key="4">
    <source>
    </source>
</evidence>
<evidence type="ECO:0000269" key="5">
    <source>
    </source>
</evidence>
<evidence type="ECO:0000269" key="6">
    <source>
    </source>
</evidence>
<evidence type="ECO:0000305" key="7"/>
<keyword id="KW-0067">ATP-binding</keyword>
<keyword id="KW-0104">Cadmium</keyword>
<keyword id="KW-0105">Cadmium resistance</keyword>
<keyword id="KW-1003">Cell membrane</keyword>
<keyword id="KW-0170">Cobalt</keyword>
<keyword id="KW-0171">Cobalt transport</keyword>
<keyword id="KW-0186">Copper</keyword>
<keyword id="KW-0187">Copper transport</keyword>
<keyword id="KW-0406">Ion transport</keyword>
<keyword id="KW-0460">Magnesium</keyword>
<keyword id="KW-0472">Membrane</keyword>
<keyword id="KW-0479">Metal-binding</keyword>
<keyword id="KW-0547">Nucleotide-binding</keyword>
<keyword id="KW-0597">Phosphoprotein</keyword>
<keyword id="KW-1185">Reference proteome</keyword>
<keyword id="KW-0346">Stress response</keyword>
<keyword id="KW-1278">Translocase</keyword>
<keyword id="KW-0812">Transmembrane</keyword>
<keyword id="KW-1133">Transmembrane helix</keyword>
<keyword id="KW-0813">Transport</keyword>
<keyword id="KW-0862">Zinc</keyword>
<keyword id="KW-0864">Zinc transport</keyword>
<name>CADA_BACSU</name>
<gene>
    <name type="primary">cadA</name>
    <name type="synonym">yvgW</name>
    <name type="ordered locus">BSU33490</name>
</gene>
<reference key="1">
    <citation type="journal article" date="1997" name="Nature">
        <title>The complete genome sequence of the Gram-positive bacterium Bacillus subtilis.</title>
        <authorList>
            <person name="Kunst F."/>
            <person name="Ogasawara N."/>
            <person name="Moszer I."/>
            <person name="Albertini A.M."/>
            <person name="Alloni G."/>
            <person name="Azevedo V."/>
            <person name="Bertero M.G."/>
            <person name="Bessieres P."/>
            <person name="Bolotin A."/>
            <person name="Borchert S."/>
            <person name="Borriss R."/>
            <person name="Boursier L."/>
            <person name="Brans A."/>
            <person name="Braun M."/>
            <person name="Brignell S.C."/>
            <person name="Bron S."/>
            <person name="Brouillet S."/>
            <person name="Bruschi C.V."/>
            <person name="Caldwell B."/>
            <person name="Capuano V."/>
            <person name="Carter N.M."/>
            <person name="Choi S.-K."/>
            <person name="Codani J.-J."/>
            <person name="Connerton I.F."/>
            <person name="Cummings N.J."/>
            <person name="Daniel R.A."/>
            <person name="Denizot F."/>
            <person name="Devine K.M."/>
            <person name="Duesterhoeft A."/>
            <person name="Ehrlich S.D."/>
            <person name="Emmerson P.T."/>
            <person name="Entian K.-D."/>
            <person name="Errington J."/>
            <person name="Fabret C."/>
            <person name="Ferrari E."/>
            <person name="Foulger D."/>
            <person name="Fritz C."/>
            <person name="Fujita M."/>
            <person name="Fujita Y."/>
            <person name="Fuma S."/>
            <person name="Galizzi A."/>
            <person name="Galleron N."/>
            <person name="Ghim S.-Y."/>
            <person name="Glaser P."/>
            <person name="Goffeau A."/>
            <person name="Golightly E.J."/>
            <person name="Grandi G."/>
            <person name="Guiseppi G."/>
            <person name="Guy B.J."/>
            <person name="Haga K."/>
            <person name="Haiech J."/>
            <person name="Harwood C.R."/>
            <person name="Henaut A."/>
            <person name="Hilbert H."/>
            <person name="Holsappel S."/>
            <person name="Hosono S."/>
            <person name="Hullo M.-F."/>
            <person name="Itaya M."/>
            <person name="Jones L.-M."/>
            <person name="Joris B."/>
            <person name="Karamata D."/>
            <person name="Kasahara Y."/>
            <person name="Klaerr-Blanchard M."/>
            <person name="Klein C."/>
            <person name="Kobayashi Y."/>
            <person name="Koetter P."/>
            <person name="Koningstein G."/>
            <person name="Krogh S."/>
            <person name="Kumano M."/>
            <person name="Kurita K."/>
            <person name="Lapidus A."/>
            <person name="Lardinois S."/>
            <person name="Lauber J."/>
            <person name="Lazarevic V."/>
            <person name="Lee S.-M."/>
            <person name="Levine A."/>
            <person name="Liu H."/>
            <person name="Masuda S."/>
            <person name="Mauel C."/>
            <person name="Medigue C."/>
            <person name="Medina N."/>
            <person name="Mellado R.P."/>
            <person name="Mizuno M."/>
            <person name="Moestl D."/>
            <person name="Nakai S."/>
            <person name="Noback M."/>
            <person name="Noone D."/>
            <person name="O'Reilly M."/>
            <person name="Ogawa K."/>
            <person name="Ogiwara A."/>
            <person name="Oudega B."/>
            <person name="Park S.-H."/>
            <person name="Parro V."/>
            <person name="Pohl T.M."/>
            <person name="Portetelle D."/>
            <person name="Porwollik S."/>
            <person name="Prescott A.M."/>
            <person name="Presecan E."/>
            <person name="Pujic P."/>
            <person name="Purnelle B."/>
            <person name="Rapoport G."/>
            <person name="Rey M."/>
            <person name="Reynolds S."/>
            <person name="Rieger M."/>
            <person name="Rivolta C."/>
            <person name="Rocha E."/>
            <person name="Roche B."/>
            <person name="Rose M."/>
            <person name="Sadaie Y."/>
            <person name="Sato T."/>
            <person name="Scanlan E."/>
            <person name="Schleich S."/>
            <person name="Schroeter R."/>
            <person name="Scoffone F."/>
            <person name="Sekiguchi J."/>
            <person name="Sekowska A."/>
            <person name="Seror S.J."/>
            <person name="Serror P."/>
            <person name="Shin B.-S."/>
            <person name="Soldo B."/>
            <person name="Sorokin A."/>
            <person name="Tacconi E."/>
            <person name="Takagi T."/>
            <person name="Takahashi H."/>
            <person name="Takemaru K."/>
            <person name="Takeuchi M."/>
            <person name="Tamakoshi A."/>
            <person name="Tanaka T."/>
            <person name="Terpstra P."/>
            <person name="Tognoni A."/>
            <person name="Tosato V."/>
            <person name="Uchiyama S."/>
            <person name="Vandenbol M."/>
            <person name="Vannier F."/>
            <person name="Vassarotti A."/>
            <person name="Viari A."/>
            <person name="Wambutt R."/>
            <person name="Wedler E."/>
            <person name="Wedler H."/>
            <person name="Weitzenegger T."/>
            <person name="Winters P."/>
            <person name="Wipat A."/>
            <person name="Yamamoto H."/>
            <person name="Yamane K."/>
            <person name="Yasumoto K."/>
            <person name="Yata K."/>
            <person name="Yoshida K."/>
            <person name="Yoshikawa H.-F."/>
            <person name="Zumstein E."/>
            <person name="Yoshikawa H."/>
            <person name="Danchin A."/>
        </authorList>
    </citation>
    <scope>NUCLEOTIDE SEQUENCE [LARGE SCALE GENOMIC DNA]</scope>
    <source>
        <strain>168</strain>
    </source>
</reference>
<reference key="2">
    <citation type="journal article" date="2001" name="Biochim. Biophys. Acta">
        <title>Tn10 insertional mutations of Bacillus subtilis that block the biosynthesis of bacilysin.</title>
        <authorList>
            <person name="Yazgan A."/>
            <person name="Oezcengiz G."/>
            <person name="Marahiel M.A."/>
        </authorList>
    </citation>
    <scope>DISRUPTION PHENOTYPE</scope>
    <source>
        <strain>168 / PY79</strain>
    </source>
</reference>
<reference key="3">
    <citation type="journal article" date="2002" name="FEMS Microbiol. Lett.">
        <title>Investigation of the yvgW Bacillus subtilis chromosomal gene involved in Cd(2+) ion resistance.</title>
        <authorList>
            <person name="Solovieva I.M."/>
            <person name="Entian K.D."/>
        </authorList>
    </citation>
    <scope>CATALYTIC ACTIVITY</scope>
    <source>
        <strain>168</strain>
    </source>
</reference>
<reference key="4">
    <citation type="journal article" date="2003" name="BioMetals">
        <title>Bacillus subtilis CPx-type ATPases: characterization of Cd, Zn, Co and Cu efflux systems.</title>
        <authorList>
            <person name="Gaballa A."/>
            <person name="Helmann J.D."/>
        </authorList>
    </citation>
    <scope>CATALYTIC ACTIVITY</scope>
    <scope>FUNCTION</scope>
    <scope>INDUCTION</scope>
    <source>
        <strain>168 / CU1065</strain>
    </source>
</reference>
<reference key="5">
    <citation type="journal article" date="2006" name="Gene">
        <title>Sporulation-specific expression of the yvgW (cadA) gene and the effect of blockage on spore properties in Bacillus subtilis.</title>
        <authorList>
            <person name="Irigul O."/>
            <person name="Yazgan-Karatas A."/>
        </authorList>
    </citation>
    <scope>DEVELOPMENTAL STAGE</scope>
    <source>
        <strain>168 / PY79</strain>
    </source>
</reference>
<accession>O32219</accession>
<proteinExistence type="evidence at protein level"/>